<dbReference type="EC" id="3.1.-.-" evidence="2"/>
<dbReference type="EMBL" id="AJ248285">
    <property type="protein sequence ID" value="CAB49654.1"/>
    <property type="molecule type" value="Genomic_DNA"/>
</dbReference>
<dbReference type="EMBL" id="HE613800">
    <property type="protein sequence ID" value="CCE70136.1"/>
    <property type="molecule type" value="Genomic_DNA"/>
</dbReference>
<dbReference type="PIR" id="E75117">
    <property type="entry name" value="E75117"/>
</dbReference>
<dbReference type="RefSeq" id="WP_010867862.1">
    <property type="nucleotide sequence ID" value="NC_000868.1"/>
</dbReference>
<dbReference type="SMR" id="Q9V0P9"/>
<dbReference type="STRING" id="272844.PAB1877"/>
<dbReference type="KEGG" id="pab:PAB1877"/>
<dbReference type="PATRIC" id="fig|272844.11.peg.780"/>
<dbReference type="eggNOG" id="arCOG04050">
    <property type="taxonomic scope" value="Archaea"/>
</dbReference>
<dbReference type="HOGENOM" id="CLU_032444_0_0_2"/>
<dbReference type="OrthoDB" id="9593at2157"/>
<dbReference type="PhylomeDB" id="Q9V0P9"/>
<dbReference type="BRENDA" id="3.1.99.B1">
    <property type="organism ID" value="5242"/>
</dbReference>
<dbReference type="Proteomes" id="UP000000810">
    <property type="component" value="Chromosome"/>
</dbReference>
<dbReference type="Proteomes" id="UP000009139">
    <property type="component" value="Chromosome"/>
</dbReference>
<dbReference type="GO" id="GO:0008409">
    <property type="term" value="F:5'-3' exonuclease activity"/>
    <property type="evidence" value="ECO:0007669"/>
    <property type="project" value="UniProtKB-UniRule"/>
</dbReference>
<dbReference type="GO" id="GO:0017108">
    <property type="term" value="F:5'-flap endonuclease activity"/>
    <property type="evidence" value="ECO:0007669"/>
    <property type="project" value="UniProtKB-UniRule"/>
</dbReference>
<dbReference type="GO" id="GO:0003677">
    <property type="term" value="F:DNA binding"/>
    <property type="evidence" value="ECO:0007669"/>
    <property type="project" value="UniProtKB-UniRule"/>
</dbReference>
<dbReference type="GO" id="GO:0000287">
    <property type="term" value="F:magnesium ion binding"/>
    <property type="evidence" value="ECO:0007669"/>
    <property type="project" value="UniProtKB-UniRule"/>
</dbReference>
<dbReference type="GO" id="GO:0006281">
    <property type="term" value="P:DNA repair"/>
    <property type="evidence" value="ECO:0007669"/>
    <property type="project" value="UniProtKB-UniRule"/>
</dbReference>
<dbReference type="GO" id="GO:0043137">
    <property type="term" value="P:DNA replication, removal of RNA primer"/>
    <property type="evidence" value="ECO:0007669"/>
    <property type="project" value="UniProtKB-UniRule"/>
</dbReference>
<dbReference type="CDD" id="cd09903">
    <property type="entry name" value="H3TH_FEN1-Arc"/>
    <property type="match status" value="1"/>
</dbReference>
<dbReference type="CDD" id="cd09867">
    <property type="entry name" value="PIN_FEN1"/>
    <property type="match status" value="1"/>
</dbReference>
<dbReference type="FunFam" id="1.10.150.20:FF:000087">
    <property type="entry name" value="Flap endonuclease 1"/>
    <property type="match status" value="1"/>
</dbReference>
<dbReference type="FunFam" id="3.40.50.1010:FF:000016">
    <property type="entry name" value="Flap endonuclease 1"/>
    <property type="match status" value="1"/>
</dbReference>
<dbReference type="Gene3D" id="1.10.150.20">
    <property type="entry name" value="5' to 3' exonuclease, C-terminal subdomain"/>
    <property type="match status" value="1"/>
</dbReference>
<dbReference type="Gene3D" id="3.40.50.1010">
    <property type="entry name" value="5'-nuclease"/>
    <property type="match status" value="1"/>
</dbReference>
<dbReference type="HAMAP" id="MF_00614">
    <property type="entry name" value="Fen"/>
    <property type="match status" value="1"/>
</dbReference>
<dbReference type="InterPro" id="IPR036279">
    <property type="entry name" value="5-3_exonuclease_C_sf"/>
</dbReference>
<dbReference type="InterPro" id="IPR023426">
    <property type="entry name" value="Flap_endonuc"/>
</dbReference>
<dbReference type="InterPro" id="IPR019973">
    <property type="entry name" value="Flap_endonuc_arc"/>
</dbReference>
<dbReference type="InterPro" id="IPR008918">
    <property type="entry name" value="HhH2"/>
</dbReference>
<dbReference type="InterPro" id="IPR029060">
    <property type="entry name" value="PIN-like_dom_sf"/>
</dbReference>
<dbReference type="InterPro" id="IPR006086">
    <property type="entry name" value="XPG-I_dom"/>
</dbReference>
<dbReference type="InterPro" id="IPR006084">
    <property type="entry name" value="XPG/Rad2"/>
</dbReference>
<dbReference type="InterPro" id="IPR019974">
    <property type="entry name" value="XPG_CS"/>
</dbReference>
<dbReference type="InterPro" id="IPR006085">
    <property type="entry name" value="XPG_DNA_repair_N"/>
</dbReference>
<dbReference type="NCBIfam" id="TIGR03674">
    <property type="entry name" value="fen_arch"/>
    <property type="match status" value="1"/>
</dbReference>
<dbReference type="PANTHER" id="PTHR11081:SF9">
    <property type="entry name" value="FLAP ENDONUCLEASE 1"/>
    <property type="match status" value="1"/>
</dbReference>
<dbReference type="PANTHER" id="PTHR11081">
    <property type="entry name" value="FLAP ENDONUCLEASE FAMILY MEMBER"/>
    <property type="match status" value="1"/>
</dbReference>
<dbReference type="Pfam" id="PF00867">
    <property type="entry name" value="XPG_I"/>
    <property type="match status" value="1"/>
</dbReference>
<dbReference type="Pfam" id="PF00752">
    <property type="entry name" value="XPG_N"/>
    <property type="match status" value="1"/>
</dbReference>
<dbReference type="PRINTS" id="PR00853">
    <property type="entry name" value="XPGRADSUPER"/>
</dbReference>
<dbReference type="SMART" id="SM00279">
    <property type="entry name" value="HhH2"/>
    <property type="match status" value="1"/>
</dbReference>
<dbReference type="SMART" id="SM00484">
    <property type="entry name" value="XPGI"/>
    <property type="match status" value="1"/>
</dbReference>
<dbReference type="SMART" id="SM00485">
    <property type="entry name" value="XPGN"/>
    <property type="match status" value="1"/>
</dbReference>
<dbReference type="SUPFAM" id="SSF47807">
    <property type="entry name" value="5' to 3' exonuclease, C-terminal subdomain"/>
    <property type="match status" value="1"/>
</dbReference>
<dbReference type="SUPFAM" id="SSF88723">
    <property type="entry name" value="PIN domain-like"/>
    <property type="match status" value="1"/>
</dbReference>
<dbReference type="PROSITE" id="PS00841">
    <property type="entry name" value="XPG_1"/>
    <property type="match status" value="1"/>
</dbReference>
<organism>
    <name type="scientific">Pyrococcus abyssi (strain GE5 / Orsay)</name>
    <dbReference type="NCBI Taxonomy" id="272844"/>
    <lineage>
        <taxon>Archaea</taxon>
        <taxon>Methanobacteriati</taxon>
        <taxon>Methanobacteriota</taxon>
        <taxon>Thermococci</taxon>
        <taxon>Thermococcales</taxon>
        <taxon>Thermococcaceae</taxon>
        <taxon>Pyrococcus</taxon>
    </lineage>
</organism>
<keyword id="KW-0227">DNA damage</keyword>
<keyword id="KW-0234">DNA repair</keyword>
<keyword id="KW-0235">DNA replication</keyword>
<keyword id="KW-0255">Endonuclease</keyword>
<keyword id="KW-0269">Exonuclease</keyword>
<keyword id="KW-0378">Hydrolase</keyword>
<keyword id="KW-0460">Magnesium</keyword>
<keyword id="KW-0479">Metal-binding</keyword>
<keyword id="KW-0540">Nuclease</keyword>
<name>FEN_PYRAB</name>
<reference key="1">
    <citation type="journal article" date="2003" name="Mol. Microbiol.">
        <title>An integrated analysis of the genome of the hyperthermophilic archaeon Pyrococcus abyssi.</title>
        <authorList>
            <person name="Cohen G.N."/>
            <person name="Barbe V."/>
            <person name="Flament D."/>
            <person name="Galperin M."/>
            <person name="Heilig R."/>
            <person name="Lecompte O."/>
            <person name="Poch O."/>
            <person name="Prieur D."/>
            <person name="Querellou J."/>
            <person name="Ripp R."/>
            <person name="Thierry J.-C."/>
            <person name="Van der Oost J."/>
            <person name="Weissenbach J."/>
            <person name="Zivanovic Y."/>
            <person name="Forterre P."/>
        </authorList>
    </citation>
    <scope>NUCLEOTIDE SEQUENCE [LARGE SCALE GENOMIC DNA]</scope>
    <source>
        <strain>GE5 / Orsay</strain>
    </source>
</reference>
<reference key="2">
    <citation type="journal article" date="2012" name="Curr. Microbiol.">
        <title>Re-annotation of two hyperthermophilic archaea Pyrococcus abyssi GE5 and Pyrococcus furiosus DSM 3638.</title>
        <authorList>
            <person name="Gao J."/>
            <person name="Wang J."/>
        </authorList>
    </citation>
    <scope>GENOME REANNOTATION</scope>
    <source>
        <strain>GE5 / Orsay</strain>
    </source>
</reference>
<gene>
    <name evidence="2" type="primary">fen</name>
    <name type="ordered locus">PYRAB07400</name>
    <name type="ORF">PAB1877</name>
</gene>
<feature type="chain" id="PRO_0000154059" description="Flap endonuclease 1">
    <location>
        <begin position="1"/>
        <end position="343"/>
    </location>
</feature>
<feature type="region of interest" description="N-domain">
    <location>
        <begin position="1"/>
        <end position="98"/>
    </location>
</feature>
<feature type="region of interest" description="I-domain">
    <location>
        <begin position="116"/>
        <end position="258"/>
    </location>
</feature>
<feature type="region of interest" description="Interaction with PCNA" evidence="2">
    <location>
        <begin position="330"/>
        <end position="338"/>
    </location>
</feature>
<feature type="binding site" evidence="2">
    <location>
        <position position="27"/>
    </location>
    <ligand>
        <name>Mg(2+)</name>
        <dbReference type="ChEBI" id="CHEBI:18420"/>
        <label>1</label>
    </ligand>
</feature>
<feature type="binding site" evidence="2">
    <location>
        <position position="80"/>
    </location>
    <ligand>
        <name>Mg(2+)</name>
        <dbReference type="ChEBI" id="CHEBI:18420"/>
        <label>1</label>
    </ligand>
</feature>
<feature type="binding site" evidence="2">
    <location>
        <position position="152"/>
    </location>
    <ligand>
        <name>Mg(2+)</name>
        <dbReference type="ChEBI" id="CHEBI:18420"/>
        <label>1</label>
    </ligand>
</feature>
<feature type="binding site" evidence="2">
    <location>
        <position position="154"/>
    </location>
    <ligand>
        <name>Mg(2+)</name>
        <dbReference type="ChEBI" id="CHEBI:18420"/>
        <label>1</label>
    </ligand>
</feature>
<feature type="binding site" evidence="2">
    <location>
        <position position="173"/>
    </location>
    <ligand>
        <name>Mg(2+)</name>
        <dbReference type="ChEBI" id="CHEBI:18420"/>
        <label>2</label>
    </ligand>
</feature>
<feature type="binding site" evidence="2">
    <location>
        <position position="175"/>
    </location>
    <ligand>
        <name>Mg(2+)</name>
        <dbReference type="ChEBI" id="CHEBI:18420"/>
        <label>2</label>
    </ligand>
</feature>
<feature type="binding site" evidence="2">
    <location>
        <position position="236"/>
    </location>
    <ligand>
        <name>Mg(2+)</name>
        <dbReference type="ChEBI" id="CHEBI:18420"/>
        <label>2</label>
    </ligand>
</feature>
<protein>
    <recommendedName>
        <fullName evidence="2">Flap endonuclease 1</fullName>
        <shortName evidence="2">FEN-1</shortName>
        <ecNumber evidence="2">3.1.-.-</ecNumber>
    </recommendedName>
    <alternativeName>
        <fullName evidence="2">Flap structure-specific endonuclease 1</fullName>
    </alternativeName>
</protein>
<evidence type="ECO:0000250" key="1"/>
<evidence type="ECO:0000255" key="2">
    <source>
        <dbReference type="HAMAP-Rule" id="MF_00614"/>
    </source>
</evidence>
<accession>Q9V0P9</accession>
<accession>G8ZGU1</accession>
<comment type="function">
    <text evidence="1">Structure-specific nuclease with 5'-flap endonuclease and 5'-3' exonuclease activities involved in DNA replication and repair. During DNA replication, cleaves the 5'-overhanging flap structure that is generated by displacement synthesis when DNA polymerase encounters the 5'-end of a downstream Okazaki fragment. Binds the unpaired 3'-DNA end and kinks the DNA to facilitate 5' cleavage specificity. Cleaves one nucleotide into the double-stranded DNA from the junction in flap DNA, leaving a nick for ligation. Also involved in the base excision repair (BER) pathway. Acts as a genome stabilization factor that prevents flaps from equilibrating into structures that lead to duplications and deletions. Also possesses 5'-3' exonuclease activity on nicked or gapped double-stranded DNA (By similarity).</text>
</comment>
<comment type="cofactor">
    <cofactor evidence="2">
        <name>Mg(2+)</name>
        <dbReference type="ChEBI" id="CHEBI:18420"/>
    </cofactor>
    <text evidence="2">Binds 2 magnesium ions per subunit. They probably participate in the reaction catalyzed by the enzyme. May bind an additional third magnesium ion after substrate binding.</text>
</comment>
<comment type="subunit">
    <text evidence="2">Interacts with PCNA. PCNA stimulates the nuclease activity without altering cleavage specificity.</text>
</comment>
<comment type="similarity">
    <text evidence="2">Belongs to the XPG/RAD2 endonuclease family. FEN1 subfamily.</text>
</comment>
<proteinExistence type="inferred from homology"/>
<sequence>MGVPIGELIPRKEIELENLYGKKIAIDALNAIYQFLSTIRQRDGTPLMDSKGRITSHLSGLFYRTINLMEAGIKPVYVFDGKPPAFKKKELEKRREAREEAEIKWKEALAKGDIEEARKYAQRATKVNEMLIEDAKKLLQLMGIPIVQAPSEGEAQAAYMAGKGDVYASASQDYDSLLFGTPRLVRNLTITGKRKMPGKDIYVEIKPELIVLEEVLKELKITREKLIELAILVGTDYNPGGIKGIGPKKALEIVKYSKDPLAKFQRQSDVDLYAIKEFFLNPPTTDDYSLKWKEPDEEGIIRFLCDEHDFSEERVKNGLERLKKAIKAGKQSTLESWFIKKKP</sequence>